<feature type="chain" id="PRO_0000189640" description="Protein FdhE">
    <location>
        <begin position="1"/>
        <end position="309"/>
    </location>
</feature>
<sequence>MSIRIIPQDELGSSEKRTADMIPPLLFPRLKNLYNRRAERLRELAENNPLGDYLRFAALIAHAQEVVLYDHPLEMDLTARIKEASAQGKPPLDIHVLPRDKHWQKLLMALIAELKPEMSGPALAVIENLEKASTQELEDMASALFASDFSSVSSDKAPFIWAALSLYWAQMANLIPGKARAEYGEQRQYCPVCGSMPVSSMVQIGTTQGLRYLHCNLCETEWHVVRVKCSNCEQSGKLHYWSLDDEQAAIKAESCDDCGTYLKILYQEKEPKVEAVADDLASLVLDARMEQEGYARSSINPFLFPGEGE</sequence>
<keyword id="KW-0963">Cytoplasm</keyword>
<keyword id="KW-1185">Reference proteome</keyword>
<proteinExistence type="inferred from homology"/>
<reference key="1">
    <citation type="journal article" date="2001" name="Nature">
        <title>Genome sequence of enterohaemorrhagic Escherichia coli O157:H7.</title>
        <authorList>
            <person name="Perna N.T."/>
            <person name="Plunkett G. III"/>
            <person name="Burland V."/>
            <person name="Mau B."/>
            <person name="Glasner J.D."/>
            <person name="Rose D.J."/>
            <person name="Mayhew G.F."/>
            <person name="Evans P.S."/>
            <person name="Gregor J."/>
            <person name="Kirkpatrick H.A."/>
            <person name="Posfai G."/>
            <person name="Hackett J."/>
            <person name="Klink S."/>
            <person name="Boutin A."/>
            <person name="Shao Y."/>
            <person name="Miller L."/>
            <person name="Grotbeck E.J."/>
            <person name="Davis N.W."/>
            <person name="Lim A."/>
            <person name="Dimalanta E.T."/>
            <person name="Potamousis K."/>
            <person name="Apodaca J."/>
            <person name="Anantharaman T.S."/>
            <person name="Lin J."/>
            <person name="Yen G."/>
            <person name="Schwartz D.C."/>
            <person name="Welch R.A."/>
            <person name="Blattner F.R."/>
        </authorList>
    </citation>
    <scope>NUCLEOTIDE SEQUENCE [LARGE SCALE GENOMIC DNA]</scope>
    <source>
        <strain>O157:H7 / EDL933 / ATCC 700927 / EHEC</strain>
    </source>
</reference>
<reference key="2">
    <citation type="journal article" date="2001" name="DNA Res.">
        <title>Complete genome sequence of enterohemorrhagic Escherichia coli O157:H7 and genomic comparison with a laboratory strain K-12.</title>
        <authorList>
            <person name="Hayashi T."/>
            <person name="Makino K."/>
            <person name="Ohnishi M."/>
            <person name="Kurokawa K."/>
            <person name="Ishii K."/>
            <person name="Yokoyama K."/>
            <person name="Han C.-G."/>
            <person name="Ohtsubo E."/>
            <person name="Nakayama K."/>
            <person name="Murata T."/>
            <person name="Tanaka M."/>
            <person name="Tobe T."/>
            <person name="Iida T."/>
            <person name="Takami H."/>
            <person name="Honda T."/>
            <person name="Sasakawa C."/>
            <person name="Ogasawara N."/>
            <person name="Yasunaga T."/>
            <person name="Kuhara S."/>
            <person name="Shiba T."/>
            <person name="Hattori M."/>
            <person name="Shinagawa H."/>
        </authorList>
    </citation>
    <scope>NUCLEOTIDE SEQUENCE [LARGE SCALE GENOMIC DNA]</scope>
    <source>
        <strain>O157:H7 / Sakai / RIMD 0509952 / EHEC</strain>
    </source>
</reference>
<dbReference type="EMBL" id="AE005174">
    <property type="protein sequence ID" value="AAG59084.1"/>
    <property type="molecule type" value="Genomic_DNA"/>
</dbReference>
<dbReference type="EMBL" id="BA000007">
    <property type="protein sequence ID" value="BAB38240.1"/>
    <property type="molecule type" value="Genomic_DNA"/>
</dbReference>
<dbReference type="PIR" id="A91231">
    <property type="entry name" value="A91231"/>
</dbReference>
<dbReference type="PIR" id="H86077">
    <property type="entry name" value="H86077"/>
</dbReference>
<dbReference type="RefSeq" id="NP_312844.1">
    <property type="nucleotide sequence ID" value="NC_002695.1"/>
</dbReference>
<dbReference type="RefSeq" id="WP_000027708.1">
    <property type="nucleotide sequence ID" value="NZ_VOAI01000016.1"/>
</dbReference>
<dbReference type="SMR" id="Q8X8B9"/>
<dbReference type="STRING" id="155864.Z5433"/>
<dbReference type="GeneID" id="915077"/>
<dbReference type="GeneID" id="93778047"/>
<dbReference type="KEGG" id="ece:Z5433"/>
<dbReference type="KEGG" id="ecs:ECs_4817"/>
<dbReference type="PATRIC" id="fig|386585.9.peg.5033"/>
<dbReference type="eggNOG" id="COG3058">
    <property type="taxonomic scope" value="Bacteria"/>
</dbReference>
<dbReference type="HOGENOM" id="CLU_055275_0_0_6"/>
<dbReference type="OMA" id="PKNLYQR"/>
<dbReference type="Proteomes" id="UP000000558">
    <property type="component" value="Chromosome"/>
</dbReference>
<dbReference type="Proteomes" id="UP000002519">
    <property type="component" value="Chromosome"/>
</dbReference>
<dbReference type="GO" id="GO:0005829">
    <property type="term" value="C:cytosol"/>
    <property type="evidence" value="ECO:0007669"/>
    <property type="project" value="TreeGrafter"/>
</dbReference>
<dbReference type="GO" id="GO:0008199">
    <property type="term" value="F:ferric iron binding"/>
    <property type="evidence" value="ECO:0007669"/>
    <property type="project" value="TreeGrafter"/>
</dbReference>
<dbReference type="GO" id="GO:0051604">
    <property type="term" value="P:protein maturation"/>
    <property type="evidence" value="ECO:0007669"/>
    <property type="project" value="TreeGrafter"/>
</dbReference>
<dbReference type="CDD" id="cd16341">
    <property type="entry name" value="FdhE"/>
    <property type="match status" value="1"/>
</dbReference>
<dbReference type="FunFam" id="3.90.1670.10:FF:000001">
    <property type="entry name" value="Protein FdhE"/>
    <property type="match status" value="1"/>
</dbReference>
<dbReference type="Gene3D" id="3.90.1670.10">
    <property type="entry name" value="FdhE-like domain"/>
    <property type="match status" value="1"/>
</dbReference>
<dbReference type="HAMAP" id="MF_00611">
    <property type="entry name" value="FdeH"/>
    <property type="match status" value="1"/>
</dbReference>
<dbReference type="InterPro" id="IPR024064">
    <property type="entry name" value="FdhE-like_sf"/>
</dbReference>
<dbReference type="InterPro" id="IPR056796">
    <property type="entry name" value="FdhE_C"/>
</dbReference>
<dbReference type="InterPro" id="IPR056797">
    <property type="entry name" value="FdhE_central"/>
</dbReference>
<dbReference type="InterPro" id="IPR056774">
    <property type="entry name" value="FdhE_N"/>
</dbReference>
<dbReference type="InterPro" id="IPR006452">
    <property type="entry name" value="Formate_DH_accessory"/>
</dbReference>
<dbReference type="NCBIfam" id="TIGR01562">
    <property type="entry name" value="FdhE"/>
    <property type="match status" value="1"/>
</dbReference>
<dbReference type="NCBIfam" id="NF002925">
    <property type="entry name" value="PRK03564.1"/>
    <property type="match status" value="1"/>
</dbReference>
<dbReference type="PANTHER" id="PTHR37689">
    <property type="entry name" value="PROTEIN FDHE"/>
    <property type="match status" value="1"/>
</dbReference>
<dbReference type="PANTHER" id="PTHR37689:SF1">
    <property type="entry name" value="PROTEIN FDHE"/>
    <property type="match status" value="1"/>
</dbReference>
<dbReference type="Pfam" id="PF24860">
    <property type="entry name" value="FdhE_C"/>
    <property type="match status" value="1"/>
</dbReference>
<dbReference type="Pfam" id="PF24859">
    <property type="entry name" value="FdhE_central"/>
    <property type="match status" value="1"/>
</dbReference>
<dbReference type="Pfam" id="PF04216">
    <property type="entry name" value="FdhE_N"/>
    <property type="match status" value="1"/>
</dbReference>
<dbReference type="PIRSF" id="PIRSF018296">
    <property type="entry name" value="Format_dh_formtn"/>
    <property type="match status" value="1"/>
</dbReference>
<dbReference type="SUPFAM" id="SSF144020">
    <property type="entry name" value="FdhE-like"/>
    <property type="match status" value="1"/>
</dbReference>
<protein>
    <recommendedName>
        <fullName evidence="1">Protein FdhE</fullName>
    </recommendedName>
</protein>
<evidence type="ECO:0000255" key="1">
    <source>
        <dbReference type="HAMAP-Rule" id="MF_00611"/>
    </source>
</evidence>
<gene>
    <name evidence="1" type="primary">fdhE</name>
    <name type="ordered locus">Z5433</name>
    <name type="ordered locus">ECs4817</name>
</gene>
<organism>
    <name type="scientific">Escherichia coli O157:H7</name>
    <dbReference type="NCBI Taxonomy" id="83334"/>
    <lineage>
        <taxon>Bacteria</taxon>
        <taxon>Pseudomonadati</taxon>
        <taxon>Pseudomonadota</taxon>
        <taxon>Gammaproteobacteria</taxon>
        <taxon>Enterobacterales</taxon>
        <taxon>Enterobacteriaceae</taxon>
        <taxon>Escherichia</taxon>
    </lineage>
</organism>
<name>FDHE_ECO57</name>
<accession>Q8X8B9</accession>
<comment type="subcellular location">
    <subcellularLocation>
        <location evidence="1">Cytoplasm</location>
    </subcellularLocation>
</comment>
<comment type="similarity">
    <text evidence="1">Belongs to the FdhE family.</text>
</comment>